<name>RECA_HAHCH</name>
<gene>
    <name evidence="1" type="primary">recA</name>
    <name type="ordered locus">HCH_05232</name>
</gene>
<comment type="function">
    <text evidence="1">Can catalyze the hydrolysis of ATP in the presence of single-stranded DNA, the ATP-dependent uptake of single-stranded DNA by duplex DNA, and the ATP-dependent hybridization of homologous single-stranded DNAs. It interacts with LexA causing its activation and leading to its autocatalytic cleavage.</text>
</comment>
<comment type="subcellular location">
    <subcellularLocation>
        <location evidence="1">Cytoplasm</location>
    </subcellularLocation>
</comment>
<comment type="similarity">
    <text evidence="1">Belongs to the RecA family.</text>
</comment>
<organism>
    <name type="scientific">Hahella chejuensis (strain KCTC 2396)</name>
    <dbReference type="NCBI Taxonomy" id="349521"/>
    <lineage>
        <taxon>Bacteria</taxon>
        <taxon>Pseudomonadati</taxon>
        <taxon>Pseudomonadota</taxon>
        <taxon>Gammaproteobacteria</taxon>
        <taxon>Oceanospirillales</taxon>
        <taxon>Hahellaceae</taxon>
        <taxon>Hahella</taxon>
    </lineage>
</organism>
<proteinExistence type="inferred from homology"/>
<feature type="chain" id="PRO_1000047929" description="Protein RecA">
    <location>
        <begin position="1"/>
        <end position="345"/>
    </location>
</feature>
<feature type="binding site" evidence="1">
    <location>
        <begin position="65"/>
        <end position="72"/>
    </location>
    <ligand>
        <name>ATP</name>
        <dbReference type="ChEBI" id="CHEBI:30616"/>
    </ligand>
</feature>
<accession>Q2SBR7</accession>
<reference key="1">
    <citation type="journal article" date="2005" name="Nucleic Acids Res.">
        <title>Genomic blueprint of Hahella chejuensis, a marine microbe producing an algicidal agent.</title>
        <authorList>
            <person name="Jeong H."/>
            <person name="Yim J.H."/>
            <person name="Lee C."/>
            <person name="Choi S.-H."/>
            <person name="Park Y.K."/>
            <person name="Yoon S.H."/>
            <person name="Hur C.-G."/>
            <person name="Kang H.-Y."/>
            <person name="Kim D."/>
            <person name="Lee H.H."/>
            <person name="Park K.H."/>
            <person name="Park S.-H."/>
            <person name="Park H.-S."/>
            <person name="Lee H.K."/>
            <person name="Oh T.K."/>
            <person name="Kim J.F."/>
        </authorList>
    </citation>
    <scope>NUCLEOTIDE SEQUENCE [LARGE SCALE GENOMIC DNA]</scope>
    <source>
        <strain>KCTC 2396</strain>
    </source>
</reference>
<evidence type="ECO:0000255" key="1">
    <source>
        <dbReference type="HAMAP-Rule" id="MF_00268"/>
    </source>
</evidence>
<dbReference type="EMBL" id="CP000155">
    <property type="protein sequence ID" value="ABC31907.1"/>
    <property type="molecule type" value="Genomic_DNA"/>
</dbReference>
<dbReference type="RefSeq" id="WP_011398971.1">
    <property type="nucleotide sequence ID" value="NC_007645.1"/>
</dbReference>
<dbReference type="SMR" id="Q2SBR7"/>
<dbReference type="STRING" id="349521.HCH_05232"/>
<dbReference type="KEGG" id="hch:HCH_05232"/>
<dbReference type="eggNOG" id="COG0468">
    <property type="taxonomic scope" value="Bacteria"/>
</dbReference>
<dbReference type="HOGENOM" id="CLU_040469_3_2_6"/>
<dbReference type="OrthoDB" id="9776733at2"/>
<dbReference type="Proteomes" id="UP000000238">
    <property type="component" value="Chromosome"/>
</dbReference>
<dbReference type="GO" id="GO:0005829">
    <property type="term" value="C:cytosol"/>
    <property type="evidence" value="ECO:0007669"/>
    <property type="project" value="TreeGrafter"/>
</dbReference>
<dbReference type="GO" id="GO:0005524">
    <property type="term" value="F:ATP binding"/>
    <property type="evidence" value="ECO:0007669"/>
    <property type="project" value="UniProtKB-UniRule"/>
</dbReference>
<dbReference type="GO" id="GO:0016887">
    <property type="term" value="F:ATP hydrolysis activity"/>
    <property type="evidence" value="ECO:0007669"/>
    <property type="project" value="InterPro"/>
</dbReference>
<dbReference type="GO" id="GO:0140664">
    <property type="term" value="F:ATP-dependent DNA damage sensor activity"/>
    <property type="evidence" value="ECO:0007669"/>
    <property type="project" value="InterPro"/>
</dbReference>
<dbReference type="GO" id="GO:0003684">
    <property type="term" value="F:damaged DNA binding"/>
    <property type="evidence" value="ECO:0007669"/>
    <property type="project" value="UniProtKB-UniRule"/>
</dbReference>
<dbReference type="GO" id="GO:0003697">
    <property type="term" value="F:single-stranded DNA binding"/>
    <property type="evidence" value="ECO:0007669"/>
    <property type="project" value="UniProtKB-UniRule"/>
</dbReference>
<dbReference type="GO" id="GO:0006310">
    <property type="term" value="P:DNA recombination"/>
    <property type="evidence" value="ECO:0007669"/>
    <property type="project" value="UniProtKB-UniRule"/>
</dbReference>
<dbReference type="GO" id="GO:0006281">
    <property type="term" value="P:DNA repair"/>
    <property type="evidence" value="ECO:0007669"/>
    <property type="project" value="UniProtKB-UniRule"/>
</dbReference>
<dbReference type="GO" id="GO:0009432">
    <property type="term" value="P:SOS response"/>
    <property type="evidence" value="ECO:0007669"/>
    <property type="project" value="UniProtKB-UniRule"/>
</dbReference>
<dbReference type="CDD" id="cd00983">
    <property type="entry name" value="RecA"/>
    <property type="match status" value="1"/>
</dbReference>
<dbReference type="FunFam" id="3.40.50.300:FF:000087">
    <property type="entry name" value="Recombinase RecA"/>
    <property type="match status" value="1"/>
</dbReference>
<dbReference type="Gene3D" id="3.40.50.300">
    <property type="entry name" value="P-loop containing nucleotide triphosphate hydrolases"/>
    <property type="match status" value="1"/>
</dbReference>
<dbReference type="HAMAP" id="MF_00268">
    <property type="entry name" value="RecA"/>
    <property type="match status" value="1"/>
</dbReference>
<dbReference type="InterPro" id="IPR003593">
    <property type="entry name" value="AAA+_ATPase"/>
</dbReference>
<dbReference type="InterPro" id="IPR013765">
    <property type="entry name" value="DNA_recomb/repair_RecA"/>
</dbReference>
<dbReference type="InterPro" id="IPR020584">
    <property type="entry name" value="DNA_recomb/repair_RecA_CS"/>
</dbReference>
<dbReference type="InterPro" id="IPR027417">
    <property type="entry name" value="P-loop_NTPase"/>
</dbReference>
<dbReference type="InterPro" id="IPR049261">
    <property type="entry name" value="RecA-like_C"/>
</dbReference>
<dbReference type="InterPro" id="IPR049428">
    <property type="entry name" value="RecA-like_N"/>
</dbReference>
<dbReference type="InterPro" id="IPR020588">
    <property type="entry name" value="RecA_ATP-bd"/>
</dbReference>
<dbReference type="InterPro" id="IPR023400">
    <property type="entry name" value="RecA_C_sf"/>
</dbReference>
<dbReference type="InterPro" id="IPR020587">
    <property type="entry name" value="RecA_monomer-monomer_interface"/>
</dbReference>
<dbReference type="NCBIfam" id="TIGR02012">
    <property type="entry name" value="tigrfam_recA"/>
    <property type="match status" value="1"/>
</dbReference>
<dbReference type="PANTHER" id="PTHR45900:SF1">
    <property type="entry name" value="MITOCHONDRIAL DNA REPAIR PROTEIN RECA HOMOLOG-RELATED"/>
    <property type="match status" value="1"/>
</dbReference>
<dbReference type="PANTHER" id="PTHR45900">
    <property type="entry name" value="RECA"/>
    <property type="match status" value="1"/>
</dbReference>
<dbReference type="Pfam" id="PF00154">
    <property type="entry name" value="RecA"/>
    <property type="match status" value="1"/>
</dbReference>
<dbReference type="Pfam" id="PF21096">
    <property type="entry name" value="RecA_C"/>
    <property type="match status" value="1"/>
</dbReference>
<dbReference type="PRINTS" id="PR00142">
    <property type="entry name" value="RECA"/>
</dbReference>
<dbReference type="SMART" id="SM00382">
    <property type="entry name" value="AAA"/>
    <property type="match status" value="1"/>
</dbReference>
<dbReference type="SUPFAM" id="SSF52540">
    <property type="entry name" value="P-loop containing nucleoside triphosphate hydrolases"/>
    <property type="match status" value="1"/>
</dbReference>
<dbReference type="SUPFAM" id="SSF54752">
    <property type="entry name" value="RecA protein, C-terminal domain"/>
    <property type="match status" value="1"/>
</dbReference>
<dbReference type="PROSITE" id="PS00321">
    <property type="entry name" value="RECA_1"/>
    <property type="match status" value="1"/>
</dbReference>
<dbReference type="PROSITE" id="PS50162">
    <property type="entry name" value="RECA_2"/>
    <property type="match status" value="1"/>
</dbReference>
<dbReference type="PROSITE" id="PS50163">
    <property type="entry name" value="RECA_3"/>
    <property type="match status" value="1"/>
</dbReference>
<sequence length="345" mass="37422">MDDNRKKALTAALSQIERQFGKGAVMRMGEQPREIIPSVSTGSLGLDIALGIGGLPYGRIVEIYGPESSGKTTLTLQVIAEAQRQGKTCAFVDAEHALDPIYAEKLGVNIDQLLVSQPDTGEQALEIADMLVRSGAVDVIIIDSVAALTPKAEIEGEMGDSHVGLQARLMSQALRKLTGSVKQANCLMIFINQIRMKIGVMFGSPETTTGGNALKFYASVRLDIRRVGSVKEGEEVVGNETRVKVVKNKVSPPFKQADFQIMYGRGIYRTGEIIDLGVKEGFVDKSGAWYSYKGDKIGQGKANSSRYLEEHPEIAVEIETAIREKLMPKTPVKEKEAPVAPVEAE</sequence>
<keyword id="KW-0067">ATP-binding</keyword>
<keyword id="KW-0963">Cytoplasm</keyword>
<keyword id="KW-0227">DNA damage</keyword>
<keyword id="KW-0233">DNA recombination</keyword>
<keyword id="KW-0234">DNA repair</keyword>
<keyword id="KW-0238">DNA-binding</keyword>
<keyword id="KW-0547">Nucleotide-binding</keyword>
<keyword id="KW-1185">Reference proteome</keyword>
<keyword id="KW-0742">SOS response</keyword>
<protein>
    <recommendedName>
        <fullName evidence="1">Protein RecA</fullName>
    </recommendedName>
    <alternativeName>
        <fullName evidence="1">Recombinase A</fullName>
    </alternativeName>
</protein>